<dbReference type="EMBL" id="CP001348">
    <property type="protein sequence ID" value="ACL76624.1"/>
    <property type="molecule type" value="Genomic_DNA"/>
</dbReference>
<dbReference type="RefSeq" id="WP_015925716.1">
    <property type="nucleotide sequence ID" value="NC_011898.1"/>
</dbReference>
<dbReference type="SMR" id="B8I4X0"/>
<dbReference type="STRING" id="394503.Ccel_2287"/>
<dbReference type="KEGG" id="cce:Ccel_2287"/>
<dbReference type="eggNOG" id="COG1481">
    <property type="taxonomic scope" value="Bacteria"/>
</dbReference>
<dbReference type="HOGENOM" id="CLU_053282_0_0_9"/>
<dbReference type="OrthoDB" id="401278at2"/>
<dbReference type="Proteomes" id="UP000001349">
    <property type="component" value="Chromosome"/>
</dbReference>
<dbReference type="GO" id="GO:0003677">
    <property type="term" value="F:DNA binding"/>
    <property type="evidence" value="ECO:0007669"/>
    <property type="project" value="UniProtKB-UniRule"/>
</dbReference>
<dbReference type="GO" id="GO:0051301">
    <property type="term" value="P:cell division"/>
    <property type="evidence" value="ECO:0007669"/>
    <property type="project" value="UniProtKB-UniRule"/>
</dbReference>
<dbReference type="GO" id="GO:0043937">
    <property type="term" value="P:regulation of sporulation"/>
    <property type="evidence" value="ECO:0007669"/>
    <property type="project" value="InterPro"/>
</dbReference>
<dbReference type="Gene3D" id="3.10.28.10">
    <property type="entry name" value="Homing endonucleases"/>
    <property type="match status" value="1"/>
</dbReference>
<dbReference type="HAMAP" id="MF_01420">
    <property type="entry name" value="HTH_type_WhiA"/>
    <property type="match status" value="1"/>
</dbReference>
<dbReference type="InterPro" id="IPR027434">
    <property type="entry name" value="Homing_endonucl"/>
</dbReference>
<dbReference type="InterPro" id="IPR018478">
    <property type="entry name" value="Sporu_reg_WhiA_N_dom"/>
</dbReference>
<dbReference type="InterPro" id="IPR003802">
    <property type="entry name" value="Sporulation_regulator_WhiA"/>
</dbReference>
<dbReference type="InterPro" id="IPR023054">
    <property type="entry name" value="Sporulation_regulator_WhiA_C"/>
</dbReference>
<dbReference type="InterPro" id="IPR039518">
    <property type="entry name" value="WhiA_LAGLIDADG_dom"/>
</dbReference>
<dbReference type="NCBIfam" id="TIGR00647">
    <property type="entry name" value="DNA_bind_WhiA"/>
    <property type="match status" value="1"/>
</dbReference>
<dbReference type="PANTHER" id="PTHR37307">
    <property type="entry name" value="CELL DIVISION PROTEIN WHIA-RELATED"/>
    <property type="match status" value="1"/>
</dbReference>
<dbReference type="PANTHER" id="PTHR37307:SF1">
    <property type="entry name" value="CELL DIVISION PROTEIN WHIA-RELATED"/>
    <property type="match status" value="1"/>
</dbReference>
<dbReference type="Pfam" id="PF02650">
    <property type="entry name" value="HTH_WhiA"/>
    <property type="match status" value="1"/>
</dbReference>
<dbReference type="Pfam" id="PF14527">
    <property type="entry name" value="LAGLIDADG_WhiA"/>
    <property type="match status" value="1"/>
</dbReference>
<dbReference type="Pfam" id="PF10298">
    <property type="entry name" value="WhiA_N"/>
    <property type="match status" value="1"/>
</dbReference>
<dbReference type="SUPFAM" id="SSF55608">
    <property type="entry name" value="Homing endonucleases"/>
    <property type="match status" value="1"/>
</dbReference>
<gene>
    <name evidence="1" type="primary">whiA</name>
    <name type="ordered locus">Ccel_2287</name>
</gene>
<comment type="function">
    <text evidence="1">Involved in cell division and chromosome segregation.</text>
</comment>
<comment type="similarity">
    <text evidence="1">Belongs to the WhiA family.</text>
</comment>
<protein>
    <recommendedName>
        <fullName evidence="1">Probable cell division protein WhiA</fullName>
    </recommendedName>
</protein>
<proteinExistence type="inferred from homology"/>
<evidence type="ECO:0000255" key="1">
    <source>
        <dbReference type="HAMAP-Rule" id="MF_01420"/>
    </source>
</evidence>
<keyword id="KW-0131">Cell cycle</keyword>
<keyword id="KW-0132">Cell division</keyword>
<keyword id="KW-0238">DNA-binding</keyword>
<keyword id="KW-1185">Reference proteome</keyword>
<name>WHIA_RUMCH</name>
<sequence length="313" mass="35801">MSFSTIVKDELCRIELHDECCMKSEILGVILIGNLFSNEKILRNTKVVTENAAFARRIYSIFRRIYGICPEVSIRRSSKLKKHVSYSLTLVPNQMINKILYDFGISAFTEDEYIPAASTLEKVCCRKSFLRAAFLSGGSISDPEKTYHLEISTHNIMSAEMIKDLLDDYNINTKIIKRKGSYVAYIKEGEQIVDFLNIIGAHGALMELENVRILKDMRNNVNRIVNCETANLEKTVNASIRQIENIKYIESTIGIDKLPENLVEIADVRVQFRDASLKELGEMLHPKLGKSGVNHRLRKLDEIAERIRKNNQR</sequence>
<organism>
    <name type="scientific">Ruminiclostridium cellulolyticum (strain ATCC 35319 / DSM 5812 / JCM 6584 / H10)</name>
    <name type="common">Clostridium cellulolyticum</name>
    <dbReference type="NCBI Taxonomy" id="394503"/>
    <lineage>
        <taxon>Bacteria</taxon>
        <taxon>Bacillati</taxon>
        <taxon>Bacillota</taxon>
        <taxon>Clostridia</taxon>
        <taxon>Eubacteriales</taxon>
        <taxon>Oscillospiraceae</taxon>
        <taxon>Ruminiclostridium</taxon>
    </lineage>
</organism>
<accession>B8I4X0</accession>
<feature type="chain" id="PRO_1000184855" description="Probable cell division protein WhiA">
    <location>
        <begin position="1"/>
        <end position="313"/>
    </location>
</feature>
<feature type="DNA-binding region" description="H-T-H motif" evidence="1">
    <location>
        <begin position="276"/>
        <end position="309"/>
    </location>
</feature>
<reference key="1">
    <citation type="submission" date="2009-01" db="EMBL/GenBank/DDBJ databases">
        <title>Complete sequence of Clostridium cellulolyticum H10.</title>
        <authorList>
            <consortium name="US DOE Joint Genome Institute"/>
            <person name="Lucas S."/>
            <person name="Copeland A."/>
            <person name="Lapidus A."/>
            <person name="Glavina del Rio T."/>
            <person name="Dalin E."/>
            <person name="Tice H."/>
            <person name="Bruce D."/>
            <person name="Goodwin L."/>
            <person name="Pitluck S."/>
            <person name="Chertkov O."/>
            <person name="Saunders E."/>
            <person name="Brettin T."/>
            <person name="Detter J.C."/>
            <person name="Han C."/>
            <person name="Larimer F."/>
            <person name="Land M."/>
            <person name="Hauser L."/>
            <person name="Kyrpides N."/>
            <person name="Ivanova N."/>
            <person name="Zhou J."/>
            <person name="Richardson P."/>
        </authorList>
    </citation>
    <scope>NUCLEOTIDE SEQUENCE [LARGE SCALE GENOMIC DNA]</scope>
    <source>
        <strain>ATCC 35319 / DSM 5812 / JCM 6584 / H10</strain>
    </source>
</reference>